<reference key="1">
    <citation type="journal article" date="2004" name="Proc. Natl. Acad. Sci. U.S.A.">
        <title>The diploid genome sequence of Candida albicans.</title>
        <authorList>
            <person name="Jones T."/>
            <person name="Federspiel N.A."/>
            <person name="Chibana H."/>
            <person name="Dungan J."/>
            <person name="Kalman S."/>
            <person name="Magee B.B."/>
            <person name="Newport G."/>
            <person name="Thorstenson Y.R."/>
            <person name="Agabian N."/>
            <person name="Magee P.T."/>
            <person name="Davis R.W."/>
            <person name="Scherer S."/>
        </authorList>
    </citation>
    <scope>NUCLEOTIDE SEQUENCE [LARGE SCALE GENOMIC DNA]</scope>
    <source>
        <strain>SC5314 / ATCC MYA-2876</strain>
    </source>
</reference>
<reference key="2">
    <citation type="journal article" date="2007" name="Genome Biol.">
        <title>Assembly of the Candida albicans genome into sixteen supercontigs aligned on the eight chromosomes.</title>
        <authorList>
            <person name="van het Hoog M."/>
            <person name="Rast T.J."/>
            <person name="Martchenko M."/>
            <person name="Grindle S."/>
            <person name="Dignard D."/>
            <person name="Hogues H."/>
            <person name="Cuomo C."/>
            <person name="Berriman M."/>
            <person name="Scherer S."/>
            <person name="Magee B.B."/>
            <person name="Whiteway M."/>
            <person name="Chibana H."/>
            <person name="Nantel A."/>
            <person name="Magee P.T."/>
        </authorList>
    </citation>
    <scope>GENOME REANNOTATION</scope>
    <source>
        <strain>SC5314 / ATCC MYA-2876</strain>
    </source>
</reference>
<reference key="3">
    <citation type="journal article" date="2013" name="Genome Biol.">
        <title>Assembly of a phased diploid Candida albicans genome facilitates allele-specific measurements and provides a simple model for repeat and indel structure.</title>
        <authorList>
            <person name="Muzzey D."/>
            <person name="Schwartz K."/>
            <person name="Weissman J.S."/>
            <person name="Sherlock G."/>
        </authorList>
    </citation>
    <scope>NUCLEOTIDE SEQUENCE [LARGE SCALE GENOMIC DNA]</scope>
    <scope>GENOME REANNOTATION</scope>
    <source>
        <strain>SC5314 / ATCC MYA-2876</strain>
    </source>
</reference>
<reference key="4">
    <citation type="journal article" date="2004" name="J. Biol. Chem.">
        <title>The TRK1 potassium transporter is the critical effector for killing of Candida albicans by the cationic protein, Histatin 5.</title>
        <authorList>
            <person name="Baev D."/>
            <person name="Rivetta A."/>
            <person name="Vylkova S."/>
            <person name="Sun J.N."/>
            <person name="Zeng G.F."/>
            <person name="Slayman C.L."/>
            <person name="Edgerton M."/>
        </authorList>
    </citation>
    <scope>FUNCTION</scope>
    <scope>TRANSPORTER ACTIVITY</scope>
    <scope>DISRUPTION PHENOTYPE</scope>
    <scope>ACTIVITY REGULATION</scope>
</reference>
<reference key="5">
    <citation type="journal article" date="2006" name="Antimicrob. Agents Chemother.">
        <title>Distinct antifungal mechanisms: beta-defensins require Candida albicans Ssa1 protein, while Trk1p mediates activity of cysteine-free cationic peptides.</title>
        <authorList>
            <person name="Vylkova S."/>
            <person name="Li X.S."/>
            <person name="Berner J.C."/>
            <person name="Edgerton M."/>
        </authorList>
    </citation>
    <scope>FUNCTION</scope>
    <scope>DISRUPTION PHENOTYPE</scope>
</reference>
<reference key="6">
    <citation type="journal article" date="2009" name="FEMS Yeast Res.">
        <title>Conservation and dispersion of sequence and function in fungal TRK potassium transporters: focus on Candida albicans.</title>
        <authorList>
            <person name="Miranda M."/>
            <person name="Bashi E."/>
            <person name="Vylkova S."/>
            <person name="Edgerton M."/>
            <person name="Slayman C."/>
            <person name="Rivetta A."/>
        </authorList>
    </citation>
    <scope>FUNCTION</scope>
    <scope>TRANSPORTER ACTIVITY</scope>
    <scope>SUBCELLULAR LOCATION</scope>
    <scope>TOPOLOGY</scope>
</reference>
<reference key="7">
    <citation type="journal article" date="2012" name="Cell">
        <title>A recently evolved transcriptional network controls biofilm development in Candida albicans.</title>
        <authorList>
            <person name="Nobile C.J."/>
            <person name="Fox E.P."/>
            <person name="Nett J.E."/>
            <person name="Sorrells T.R."/>
            <person name="Mitrovich Q.M."/>
            <person name="Hernday A.D."/>
            <person name="Tuch B.B."/>
            <person name="Andes D.R."/>
            <person name="Johnson A.D."/>
        </authorList>
    </citation>
    <scope>INDUCTION</scope>
</reference>
<reference key="8">
    <citation type="journal article" date="2021" name="Biochim. Biophys. Acta">
        <title>Regulation and activity of CaTrk1, CaAcu1 and CaHak1, the three plasma membrane potassium transporters in Candida albicans.</title>
        <authorList>
            <person name="Ruiz-Castilla F.J."/>
            <person name="Bieber J."/>
            <person name="Caro G."/>
            <person name="Michan C."/>
            <person name="Sychrova H."/>
            <person name="Ramos J."/>
        </authorList>
    </citation>
    <scope>FUNCTION</scope>
    <scope>INDUCTION</scope>
    <scope>TRANSPORTER ACTIVITY</scope>
</reference>
<proteinExistence type="evidence at protein level"/>
<protein>
    <recommendedName>
        <fullName evidence="8">Potassium transporter TRK1</fullName>
    </recommendedName>
</protein>
<accession>A0A1D8PTL7</accession>
<comment type="function">
    <text evidence="3 5 7">Potassium transporter that mediates K(+) influx, as well as Cl(-) efflux as a secondary function (PubMed:15485849, PubMed:19175416, PubMed:33069635). TRK1 is the major K(+) uptake transporter that regulates membrane potential and intracellular pH (PubMed:33069635). The TRK1-mediated Cl(-) efflux should serve as a Cl(-) detoxification route and may play a role in sustaining C.albicans on mammalian epithelial surfaces, or in physiological saline solutions such as saliva (PubMed:19175416).</text>
</comment>
<comment type="function">
    <text evidence="3 4">Mediates candidacidal activities of cysteine-free peptides, but not of defensins (PubMed:16377704). The hallmark of salivary gland-secreted histatin-5 (Hst 5) killing of C.albicans is the rapid efflux of cellular ATP and other small nucleotides and ions from the cell as well as concurrent intracellular uptake of propidium iodide (PI) (PubMed:16377704). TRK1 is the channel for Hst 5-induced killing and histatin-5 may directly or indirectly alter TRK1 function, allowing the efflux of larger anions, including ATP, and the influx of small cationic dyes, such as PI (PubMed:15485849, PubMed:16377704).</text>
</comment>
<comment type="catalytic activity">
    <reaction evidence="3 5 7">
        <text>K(+)(in) = K(+)(out)</text>
        <dbReference type="Rhea" id="RHEA:29463"/>
        <dbReference type="ChEBI" id="CHEBI:29103"/>
    </reaction>
    <physiologicalReaction direction="right-to-left" evidence="3 5 7">
        <dbReference type="Rhea" id="RHEA:29465"/>
    </physiologicalReaction>
</comment>
<comment type="catalytic activity">
    <reaction evidence="3 5">
        <text>chloride(in) = chloride(out)</text>
        <dbReference type="Rhea" id="RHEA:29823"/>
        <dbReference type="ChEBI" id="CHEBI:17996"/>
    </reaction>
    <physiologicalReaction direction="left-to-right" evidence="3 5">
        <dbReference type="Rhea" id="RHEA:29824"/>
    </physiologicalReaction>
</comment>
<comment type="activity regulation">
    <text evidence="3">TRK1-mediated chloride conductance is blocked by 4,4'-diisothiocyanatostilbene-2,2'-disulfonic acid.</text>
</comment>
<comment type="subcellular location">
    <subcellularLocation>
        <location evidence="10">Cell membrane</location>
        <topology evidence="1">Multi-pass membrane protein</topology>
    </subcellularLocation>
</comment>
<comment type="induction">
    <text evidence="6 7">Induced during biofilm formation (PubMed:22265407). Expression diminishes when pH was altered, either to acidic or to basic conditions (PubMed:33069635).</text>
</comment>
<comment type="disruption phenotype">
    <text evidence="3 4">Abolishes salivary gland-secreted histatin 5 (Hst 5) mediated killing.</text>
</comment>
<comment type="similarity">
    <text evidence="9">Belongs to the TrkH potassium transport family.</text>
</comment>
<sequence length="1056" mass="119431">MLYRVSGFYKRHTRNFTNIDYGYYIRNFIHHIASKIYPYAKVVLPNFRAAHYFYILTLVILGSILVYPVKTCAYIDVLFFTAGASTQAGLNTVNVNDLSLYQQIVLYLLATLATPIFIHGSLLFVRLYYFERHFDNIKERSLMDYRMRKSATLARLGSAPTMSSTRLNTFNNQVLGFQEREAEKGSSSSPQSSSSQTSQPVSTAYNDQGGNDIEHHSEPSDSDDDESGNGPVTFQEKIHFEEPQRPRSQRRHSRTDSGIKFSALPHPRRRKSIDPEDMYRSINMLQEHKKNQEAKSKGIQFLNIGSPVRRKSRSSNIEAFPEEDTNPSRGDEITPATNSVGTGNNDEDEDDILIIKPPIEIENSDEANPIFTKKKKLASQIQFKETPGKAKKWITTKTRKHYNPWTSKLKKTLSNSSKKGSLSVVPTDTEDDSEDEEYASIDSETSDISDNEHAADNAEGSDVDSVGSYEEDEDEDEHNSDDDDDGEGERRLGNGASLTKAQSHLVLPSKDETGGKKYTKRSNTLDTPQQNTSDGRKIRKKAPKRKTPRTQRNASFNQHSNVSIGDGSIENVDTNDSYQRLSRTMSGNYLSWTPTVGRNSTFIKLTDEQKEELGGIEYRAVKLLIKIIVVYYVGFNIIPGVMLSIWIYCMPHYKNLMISSSISPAWWAFFTSQSSFNDLGLTLTSNSMMSFNQNAFVQILCSFLIVIGNTGFPILLRFIIWVMFKTARPLSLYKESLGFLLDHPRRCFTLLFPSVPTWWLFFILVVLNGFDLVIFCILDLHDDTFKGVDMGYRVLNGLFQAFCTRTVGFSVMDLSQLHAATQVSYLIMMYISVLPIAISVRRTNVYEEQSLGVYAKENAEGVDESAPSNYVGSHLRNQLSYDLWYICLGLFIICIAEGKRLKEQDLRFSIFAVLFEIVSAYGTVGMSMGYPGVDCSLSGEFNVISKLVIIAMMIRGRHRGLPYTIDRAIMLPNAAMKRHDRLQEEHAINRHNTMERTTTLGRVATFGNGPIDGGNNLLTRAITNIEHRLRNRRDGRSESSTVSEDPRYVVRTVSEV</sequence>
<dbReference type="EMBL" id="CP017630">
    <property type="protein sequence ID" value="AOW31484.1"/>
    <property type="molecule type" value="Genomic_DNA"/>
</dbReference>
<dbReference type="RefSeq" id="XP_714227.2">
    <property type="nucleotide sequence ID" value="XM_709134.2"/>
</dbReference>
<dbReference type="SMR" id="A0A1D8PTL7"/>
<dbReference type="FunCoup" id="A0A1D8PTL7">
    <property type="interactions" value="26"/>
</dbReference>
<dbReference type="STRING" id="237561.A0A1D8PTL7"/>
<dbReference type="EnsemblFungi" id="CR_07960C_A-T">
    <property type="protein sequence ID" value="CR_07960C_A-T-p1"/>
    <property type="gene ID" value="CR_07960C_A"/>
</dbReference>
<dbReference type="GeneID" id="3644153"/>
<dbReference type="KEGG" id="cal:CAALFM_CR07960CA"/>
<dbReference type="CGD" id="CAL0000190529">
    <property type="gene designation" value="TRK1"/>
</dbReference>
<dbReference type="VEuPathDB" id="FungiDB:CR_07960C_A"/>
<dbReference type="eggNOG" id="KOG1341">
    <property type="taxonomic scope" value="Eukaryota"/>
</dbReference>
<dbReference type="InParanoid" id="A0A1D8PTL7"/>
<dbReference type="OrthoDB" id="9999863at2759"/>
<dbReference type="Proteomes" id="UP000000559">
    <property type="component" value="Chromosome R"/>
</dbReference>
<dbReference type="GO" id="GO:0034707">
    <property type="term" value="C:chloride channel complex"/>
    <property type="evidence" value="ECO:0007669"/>
    <property type="project" value="UniProtKB-KW"/>
</dbReference>
<dbReference type="GO" id="GO:0016020">
    <property type="term" value="C:membrane"/>
    <property type="evidence" value="ECO:0000314"/>
    <property type="project" value="CGD"/>
</dbReference>
<dbReference type="GO" id="GO:0005886">
    <property type="term" value="C:plasma membrane"/>
    <property type="evidence" value="ECO:0000318"/>
    <property type="project" value="GO_Central"/>
</dbReference>
<dbReference type="GO" id="GO:0005254">
    <property type="term" value="F:chloride channel activity"/>
    <property type="evidence" value="ECO:0007669"/>
    <property type="project" value="UniProtKB-KW"/>
</dbReference>
<dbReference type="GO" id="GO:0015108">
    <property type="term" value="F:chloride transmembrane transporter activity"/>
    <property type="evidence" value="ECO:0000314"/>
    <property type="project" value="CGD"/>
</dbReference>
<dbReference type="GO" id="GO:0140107">
    <property type="term" value="F:high-affinity potassium ion transmembrane transporter activity"/>
    <property type="evidence" value="ECO:0000318"/>
    <property type="project" value="GO_Central"/>
</dbReference>
<dbReference type="GO" id="GO:0015079">
    <property type="term" value="F:potassium ion transmembrane transporter activity"/>
    <property type="evidence" value="ECO:0000314"/>
    <property type="project" value="CGD"/>
</dbReference>
<dbReference type="GO" id="GO:0006821">
    <property type="term" value="P:chloride transport"/>
    <property type="evidence" value="ECO:0000314"/>
    <property type="project" value="CGD"/>
</dbReference>
<dbReference type="GO" id="GO:0030007">
    <property type="term" value="P:intracellular potassium ion homeostasis"/>
    <property type="evidence" value="ECO:0000314"/>
    <property type="project" value="CGD"/>
</dbReference>
<dbReference type="GO" id="GO:1990573">
    <property type="term" value="P:potassium ion import across plasma membrane"/>
    <property type="evidence" value="ECO:0000315"/>
    <property type="project" value="CGD"/>
</dbReference>
<dbReference type="GO" id="GO:0009636">
    <property type="term" value="P:response to toxic substance"/>
    <property type="evidence" value="ECO:0000315"/>
    <property type="project" value="CGD"/>
</dbReference>
<dbReference type="InterPro" id="IPR003445">
    <property type="entry name" value="Cat_transpt"/>
</dbReference>
<dbReference type="InterPro" id="IPR004773">
    <property type="entry name" value="K/Na_transp_Trk1/HKT1"/>
</dbReference>
<dbReference type="InterPro" id="IPR015958">
    <property type="entry name" value="Trk1_fungi"/>
</dbReference>
<dbReference type="InterPro" id="IPR051143">
    <property type="entry name" value="TrkH_K-transport"/>
</dbReference>
<dbReference type="NCBIfam" id="TIGR00934">
    <property type="entry name" value="2a38euk"/>
    <property type="match status" value="1"/>
</dbReference>
<dbReference type="PANTHER" id="PTHR31064:SF30">
    <property type="entry name" value="HIGH-AFFINITY POTASSIUM TRANSPORT PROTEIN-RELATED"/>
    <property type="match status" value="1"/>
</dbReference>
<dbReference type="PANTHER" id="PTHR31064">
    <property type="entry name" value="POTASSIUM TRANSPORT PROTEIN DDB_G0292412-RELATED"/>
    <property type="match status" value="1"/>
</dbReference>
<dbReference type="Pfam" id="PF02386">
    <property type="entry name" value="TrkH"/>
    <property type="match status" value="1"/>
</dbReference>
<dbReference type="PIRSF" id="PIRSF002450">
    <property type="entry name" value="K+_transpter_TRK"/>
    <property type="match status" value="1"/>
</dbReference>
<keyword id="KW-1003">Cell membrane</keyword>
<keyword id="KW-0868">Chloride</keyword>
<keyword id="KW-0869">Chloride channel</keyword>
<keyword id="KW-0407">Ion channel</keyword>
<keyword id="KW-0406">Ion transport</keyword>
<keyword id="KW-0472">Membrane</keyword>
<keyword id="KW-0630">Potassium</keyword>
<keyword id="KW-0633">Potassium transport</keyword>
<keyword id="KW-1185">Reference proteome</keyword>
<keyword id="KW-0812">Transmembrane</keyword>
<keyword id="KW-1133">Transmembrane helix</keyword>
<keyword id="KW-0813">Transport</keyword>
<name>TRK1_CANAL</name>
<evidence type="ECO:0000255" key="1"/>
<evidence type="ECO:0000256" key="2">
    <source>
        <dbReference type="SAM" id="MobiDB-lite"/>
    </source>
</evidence>
<evidence type="ECO:0000269" key="3">
    <source>
    </source>
</evidence>
<evidence type="ECO:0000269" key="4">
    <source>
    </source>
</evidence>
<evidence type="ECO:0000269" key="5">
    <source>
    </source>
</evidence>
<evidence type="ECO:0000269" key="6">
    <source>
    </source>
</evidence>
<evidence type="ECO:0000269" key="7">
    <source>
    </source>
</evidence>
<evidence type="ECO:0000303" key="8">
    <source>
    </source>
</evidence>
<evidence type="ECO:0000305" key="9"/>
<evidence type="ECO:0000305" key="10">
    <source>
    </source>
</evidence>
<organism>
    <name type="scientific">Candida albicans (strain SC5314 / ATCC MYA-2876)</name>
    <name type="common">Yeast</name>
    <dbReference type="NCBI Taxonomy" id="237561"/>
    <lineage>
        <taxon>Eukaryota</taxon>
        <taxon>Fungi</taxon>
        <taxon>Dikarya</taxon>
        <taxon>Ascomycota</taxon>
        <taxon>Saccharomycotina</taxon>
        <taxon>Pichiomycetes</taxon>
        <taxon>Debaryomycetaceae</taxon>
        <taxon>Candida/Lodderomyces clade</taxon>
        <taxon>Candida</taxon>
    </lineage>
</organism>
<gene>
    <name evidence="8" type="primary">TRK1</name>
    <name type="ordered locus">CAALFM_CR07960CA</name>
    <name type="ordered locus">orf19.8233</name>
</gene>
<feature type="chain" id="PRO_0000459222" description="Potassium transporter TRK1">
    <location>
        <begin position="1"/>
        <end position="1056"/>
    </location>
</feature>
<feature type="topological domain" description="Cytoplasmic" evidence="10">
    <location>
        <begin position="1"/>
        <end position="46"/>
    </location>
</feature>
<feature type="transmembrane region" description="Helical; Name=1" evidence="10">
    <location>
        <begin position="47"/>
        <end position="67"/>
    </location>
</feature>
<feature type="topological domain" description="Extracellular" evidence="10">
    <location>
        <begin position="68"/>
        <end position="73"/>
    </location>
</feature>
<feature type="intramembrane region" evidence="10">
    <location>
        <begin position="74"/>
        <end position="90"/>
    </location>
</feature>
<feature type="topological domain" description="Extracellular" evidence="10">
    <location>
        <begin position="91"/>
        <end position="99"/>
    </location>
</feature>
<feature type="transmembrane region" description="Helical; Name=2" evidence="10">
    <location>
        <begin position="100"/>
        <end position="122"/>
    </location>
</feature>
<feature type="topological domain" description="Cytoplasmic" evidence="10">
    <location>
        <begin position="123"/>
        <end position="622"/>
    </location>
</feature>
<feature type="transmembrane region" description="Helical; Name=3" evidence="10">
    <location>
        <begin position="623"/>
        <end position="646"/>
    </location>
</feature>
<feature type="topological domain" description="Extracellular" evidence="10">
    <location>
        <begin position="647"/>
        <end position="665"/>
    </location>
</feature>
<feature type="intramembrane region" evidence="10">
    <location>
        <begin position="666"/>
        <end position="682"/>
    </location>
</feature>
<feature type="topological domain" description="Extracellular" evidence="10">
    <location>
        <begin position="683"/>
        <end position="693"/>
    </location>
</feature>
<feature type="transmembrane region" description="Helical; Name=4" evidence="10">
    <location>
        <begin position="694"/>
        <end position="710"/>
    </location>
</feature>
<feature type="topological domain" description="Cytoplasmic" evidence="10">
    <location>
        <begin position="711"/>
        <end position="754"/>
    </location>
</feature>
<feature type="transmembrane region" description="Helical; Name=5" evidence="10">
    <location>
        <begin position="755"/>
        <end position="778"/>
    </location>
</feature>
<feature type="topological domain" description="Extracellular" evidence="10">
    <location>
        <begin position="779"/>
        <end position="793"/>
    </location>
</feature>
<feature type="intramembrane region" evidence="10">
    <location>
        <begin position="794"/>
        <end position="810"/>
    </location>
</feature>
<feature type="topological domain" description="Extracellular" evidence="10">
    <location>
        <begin position="811"/>
        <end position="817"/>
    </location>
</feature>
<feature type="transmembrane region" description="Helical; Name=6" evidence="10">
    <location>
        <begin position="818"/>
        <end position="841"/>
    </location>
</feature>
<feature type="topological domain" description="Cytoplasmic" evidence="10">
    <location>
        <begin position="842"/>
        <end position="874"/>
    </location>
</feature>
<feature type="transmembrane region" description="Helical; Name=7" evidence="10">
    <location>
        <begin position="875"/>
        <end position="896"/>
    </location>
</feature>
<feature type="topological domain" description="Extracellular" evidence="10">
    <location>
        <begin position="897"/>
        <end position="909"/>
    </location>
</feature>
<feature type="intramembrane region" evidence="10">
    <location>
        <begin position="910"/>
        <end position="928"/>
    </location>
</feature>
<feature type="topological domain" description="Extracellular" evidence="10">
    <location>
        <begin position="929"/>
        <end position="942"/>
    </location>
</feature>
<feature type="transmembrane region" description="Helical; Name=8" evidence="10">
    <location>
        <begin position="943"/>
        <end position="965"/>
    </location>
</feature>
<feature type="topological domain" description="Cytoplasmic" evidence="10">
    <location>
        <begin position="966"/>
        <end position="1056"/>
    </location>
</feature>
<feature type="region of interest" description="Disordered" evidence="2">
    <location>
        <begin position="180"/>
        <end position="276"/>
    </location>
</feature>
<feature type="region of interest" description="Disordered" evidence="2">
    <location>
        <begin position="290"/>
        <end position="350"/>
    </location>
</feature>
<feature type="region of interest" description="Disordered" evidence="2">
    <location>
        <begin position="404"/>
        <end position="571"/>
    </location>
</feature>
<feature type="compositionally biased region" description="Low complexity" evidence="2">
    <location>
        <begin position="186"/>
        <end position="203"/>
    </location>
</feature>
<feature type="compositionally biased region" description="Basic and acidic residues" evidence="2">
    <location>
        <begin position="236"/>
        <end position="245"/>
    </location>
</feature>
<feature type="compositionally biased region" description="Polar residues" evidence="2">
    <location>
        <begin position="335"/>
        <end position="344"/>
    </location>
</feature>
<feature type="compositionally biased region" description="Low complexity" evidence="2">
    <location>
        <begin position="412"/>
        <end position="423"/>
    </location>
</feature>
<feature type="compositionally biased region" description="Acidic residues" evidence="2">
    <location>
        <begin position="428"/>
        <end position="449"/>
    </location>
</feature>
<feature type="compositionally biased region" description="Acidic residues" evidence="2">
    <location>
        <begin position="469"/>
        <end position="487"/>
    </location>
</feature>
<feature type="compositionally biased region" description="Polar residues" evidence="2">
    <location>
        <begin position="521"/>
        <end position="533"/>
    </location>
</feature>
<feature type="compositionally biased region" description="Basic residues" evidence="2">
    <location>
        <begin position="537"/>
        <end position="549"/>
    </location>
</feature>
<feature type="compositionally biased region" description="Polar residues" evidence="2">
    <location>
        <begin position="553"/>
        <end position="563"/>
    </location>
</feature>